<name>KTHY_SYNSC</name>
<gene>
    <name evidence="1" type="primary">tmk</name>
    <name type="ordered locus">Syncc9605_2380</name>
</gene>
<keyword id="KW-0067">ATP-binding</keyword>
<keyword id="KW-0418">Kinase</keyword>
<keyword id="KW-0545">Nucleotide biosynthesis</keyword>
<keyword id="KW-0547">Nucleotide-binding</keyword>
<keyword id="KW-0808">Transferase</keyword>
<protein>
    <recommendedName>
        <fullName evidence="1">Thymidylate kinase</fullName>
        <ecNumber evidence="1">2.7.4.9</ecNumber>
    </recommendedName>
    <alternativeName>
        <fullName evidence="1">dTMP kinase</fullName>
    </alternativeName>
</protein>
<organism>
    <name type="scientific">Synechococcus sp. (strain CC9605)</name>
    <dbReference type="NCBI Taxonomy" id="110662"/>
    <lineage>
        <taxon>Bacteria</taxon>
        <taxon>Bacillati</taxon>
        <taxon>Cyanobacteriota</taxon>
        <taxon>Cyanophyceae</taxon>
        <taxon>Synechococcales</taxon>
        <taxon>Synechococcaceae</taxon>
        <taxon>Synechococcus</taxon>
    </lineage>
</organism>
<feature type="chain" id="PRO_1000023304" description="Thymidylate kinase">
    <location>
        <begin position="1"/>
        <end position="209"/>
    </location>
</feature>
<feature type="binding site" evidence="1">
    <location>
        <begin position="10"/>
        <end position="17"/>
    </location>
    <ligand>
        <name>ATP</name>
        <dbReference type="ChEBI" id="CHEBI:30616"/>
    </ligand>
</feature>
<accession>Q3AH20</accession>
<reference key="1">
    <citation type="submission" date="2005-07" db="EMBL/GenBank/DDBJ databases">
        <title>Complete sequence of Synechococcus sp. CC9605.</title>
        <authorList>
            <consortium name="US DOE Joint Genome Institute"/>
            <person name="Copeland A."/>
            <person name="Lucas S."/>
            <person name="Lapidus A."/>
            <person name="Barry K."/>
            <person name="Detter J.C."/>
            <person name="Glavina T."/>
            <person name="Hammon N."/>
            <person name="Israni S."/>
            <person name="Pitluck S."/>
            <person name="Schmutz J."/>
            <person name="Martinez M."/>
            <person name="Larimer F."/>
            <person name="Land M."/>
            <person name="Kyrpides N."/>
            <person name="Ivanova N."/>
            <person name="Richardson P."/>
        </authorList>
    </citation>
    <scope>NUCLEOTIDE SEQUENCE [LARGE SCALE GENOMIC DNA]</scope>
    <source>
        <strain>CC9605</strain>
    </source>
</reference>
<dbReference type="EC" id="2.7.4.9" evidence="1"/>
<dbReference type="EMBL" id="CP000110">
    <property type="protein sequence ID" value="ABB36112.1"/>
    <property type="molecule type" value="Genomic_DNA"/>
</dbReference>
<dbReference type="RefSeq" id="WP_011365309.1">
    <property type="nucleotide sequence ID" value="NC_007516.1"/>
</dbReference>
<dbReference type="SMR" id="Q3AH20"/>
<dbReference type="STRING" id="110662.Syncc9605_2380"/>
<dbReference type="KEGG" id="syd:Syncc9605_2380"/>
<dbReference type="eggNOG" id="COG0125">
    <property type="taxonomic scope" value="Bacteria"/>
</dbReference>
<dbReference type="HOGENOM" id="CLU_049131_0_0_3"/>
<dbReference type="OrthoDB" id="9774907at2"/>
<dbReference type="GO" id="GO:0005829">
    <property type="term" value="C:cytosol"/>
    <property type="evidence" value="ECO:0007669"/>
    <property type="project" value="TreeGrafter"/>
</dbReference>
<dbReference type="GO" id="GO:0005524">
    <property type="term" value="F:ATP binding"/>
    <property type="evidence" value="ECO:0007669"/>
    <property type="project" value="UniProtKB-UniRule"/>
</dbReference>
<dbReference type="GO" id="GO:0004798">
    <property type="term" value="F:dTMP kinase activity"/>
    <property type="evidence" value="ECO:0007669"/>
    <property type="project" value="UniProtKB-UniRule"/>
</dbReference>
<dbReference type="GO" id="GO:0006233">
    <property type="term" value="P:dTDP biosynthetic process"/>
    <property type="evidence" value="ECO:0007669"/>
    <property type="project" value="InterPro"/>
</dbReference>
<dbReference type="GO" id="GO:0006235">
    <property type="term" value="P:dTTP biosynthetic process"/>
    <property type="evidence" value="ECO:0007669"/>
    <property type="project" value="UniProtKB-UniRule"/>
</dbReference>
<dbReference type="GO" id="GO:0006227">
    <property type="term" value="P:dUDP biosynthetic process"/>
    <property type="evidence" value="ECO:0007669"/>
    <property type="project" value="TreeGrafter"/>
</dbReference>
<dbReference type="CDD" id="cd01672">
    <property type="entry name" value="TMPK"/>
    <property type="match status" value="1"/>
</dbReference>
<dbReference type="FunFam" id="3.40.50.300:FF:000225">
    <property type="entry name" value="Thymidylate kinase"/>
    <property type="match status" value="1"/>
</dbReference>
<dbReference type="Gene3D" id="3.40.50.300">
    <property type="entry name" value="P-loop containing nucleotide triphosphate hydrolases"/>
    <property type="match status" value="1"/>
</dbReference>
<dbReference type="HAMAP" id="MF_00165">
    <property type="entry name" value="Thymidylate_kinase"/>
    <property type="match status" value="1"/>
</dbReference>
<dbReference type="InterPro" id="IPR027417">
    <property type="entry name" value="P-loop_NTPase"/>
</dbReference>
<dbReference type="InterPro" id="IPR039430">
    <property type="entry name" value="Thymidylate_kin-like_dom"/>
</dbReference>
<dbReference type="InterPro" id="IPR018095">
    <property type="entry name" value="Thymidylate_kin_CS"/>
</dbReference>
<dbReference type="InterPro" id="IPR018094">
    <property type="entry name" value="Thymidylate_kinase"/>
</dbReference>
<dbReference type="NCBIfam" id="TIGR00041">
    <property type="entry name" value="DTMP_kinase"/>
    <property type="match status" value="1"/>
</dbReference>
<dbReference type="PANTHER" id="PTHR10344">
    <property type="entry name" value="THYMIDYLATE KINASE"/>
    <property type="match status" value="1"/>
</dbReference>
<dbReference type="PANTHER" id="PTHR10344:SF4">
    <property type="entry name" value="UMP-CMP KINASE 2, MITOCHONDRIAL"/>
    <property type="match status" value="1"/>
</dbReference>
<dbReference type="Pfam" id="PF02223">
    <property type="entry name" value="Thymidylate_kin"/>
    <property type="match status" value="1"/>
</dbReference>
<dbReference type="SUPFAM" id="SSF52540">
    <property type="entry name" value="P-loop containing nucleoside triphosphate hydrolases"/>
    <property type="match status" value="1"/>
</dbReference>
<dbReference type="PROSITE" id="PS01331">
    <property type="entry name" value="THYMIDYLATE_KINASE"/>
    <property type="match status" value="1"/>
</dbReference>
<evidence type="ECO:0000255" key="1">
    <source>
        <dbReference type="HAMAP-Rule" id="MF_00165"/>
    </source>
</evidence>
<comment type="function">
    <text evidence="1">Phosphorylation of dTMP to form dTDP in both de novo and salvage pathways of dTTP synthesis.</text>
</comment>
<comment type="catalytic activity">
    <reaction evidence="1">
        <text>dTMP + ATP = dTDP + ADP</text>
        <dbReference type="Rhea" id="RHEA:13517"/>
        <dbReference type="ChEBI" id="CHEBI:30616"/>
        <dbReference type="ChEBI" id="CHEBI:58369"/>
        <dbReference type="ChEBI" id="CHEBI:63528"/>
        <dbReference type="ChEBI" id="CHEBI:456216"/>
        <dbReference type="EC" id="2.7.4.9"/>
    </reaction>
</comment>
<comment type="similarity">
    <text evidence="1">Belongs to the thymidylate kinase family.</text>
</comment>
<proteinExistence type="inferred from homology"/>
<sequence length="209" mass="22993">MTGRFIVLEGIDGCGKTTQIQHLLEWLPNSGLMPKGAAVVCTREPGGTPLGRSIRELLLHTSDQEAPAPTAELMLYAADRAQHVETLIRPALERGDWVISDRFSGSTLAYQGYGRGLDRDLIQRLEQIATAGLQPDITLWLRLSVQESLQRRLGDKEDRIEAEGAAFLERVAQGFAQLAEHRSWCAVAADQSASAVRAALERQLQEHLA</sequence>